<protein>
    <recommendedName>
        <fullName evidence="1">Phosphoenolpyruvate carboxykinase (ATP)</fullName>
        <shortName evidence="1">PCK</shortName>
        <shortName evidence="1">PEP carboxykinase</shortName>
        <shortName evidence="1">PEPCK</shortName>
        <ecNumber evidence="1">4.1.1.49</ecNumber>
    </recommendedName>
</protein>
<proteinExistence type="inferred from homology"/>
<gene>
    <name evidence="1" type="primary">pckA</name>
    <name type="ordered locus">SERP1353</name>
</gene>
<feature type="chain" id="PRO_0000203851" description="Phosphoenolpyruvate carboxykinase (ATP)">
    <location>
        <begin position="1"/>
        <end position="530"/>
    </location>
</feature>
<feature type="binding site" evidence="1">
    <location>
        <position position="58"/>
    </location>
    <ligand>
        <name>substrate</name>
    </ligand>
</feature>
<feature type="binding site" evidence="1">
    <location>
        <position position="195"/>
    </location>
    <ligand>
        <name>substrate</name>
    </ligand>
</feature>
<feature type="binding site" evidence="1">
    <location>
        <position position="201"/>
    </location>
    <ligand>
        <name>ATP</name>
        <dbReference type="ChEBI" id="CHEBI:30616"/>
    </ligand>
</feature>
<feature type="binding site" evidence="1">
    <location>
        <position position="201"/>
    </location>
    <ligand>
        <name>Mn(2+)</name>
        <dbReference type="ChEBI" id="CHEBI:29035"/>
    </ligand>
</feature>
<feature type="binding site" evidence="1">
    <location>
        <position position="201"/>
    </location>
    <ligand>
        <name>substrate</name>
    </ligand>
</feature>
<feature type="binding site" evidence="1">
    <location>
        <position position="220"/>
    </location>
    <ligand>
        <name>ATP</name>
        <dbReference type="ChEBI" id="CHEBI:30616"/>
    </ligand>
</feature>
<feature type="binding site" evidence="1">
    <location>
        <position position="220"/>
    </location>
    <ligand>
        <name>Mn(2+)</name>
        <dbReference type="ChEBI" id="CHEBI:29035"/>
    </ligand>
</feature>
<feature type="binding site" evidence="1">
    <location>
        <begin position="236"/>
        <end position="244"/>
    </location>
    <ligand>
        <name>ATP</name>
        <dbReference type="ChEBI" id="CHEBI:30616"/>
    </ligand>
</feature>
<feature type="binding site" evidence="1">
    <location>
        <position position="257"/>
    </location>
    <ligand>
        <name>Mn(2+)</name>
        <dbReference type="ChEBI" id="CHEBI:29035"/>
    </ligand>
</feature>
<feature type="binding site" evidence="1">
    <location>
        <position position="285"/>
    </location>
    <ligand>
        <name>ATP</name>
        <dbReference type="ChEBI" id="CHEBI:30616"/>
    </ligand>
</feature>
<feature type="binding site" evidence="1">
    <location>
        <position position="321"/>
    </location>
    <ligand>
        <name>ATP</name>
        <dbReference type="ChEBI" id="CHEBI:30616"/>
    </ligand>
</feature>
<feature type="binding site" evidence="1">
    <location>
        <position position="321"/>
    </location>
    <ligand>
        <name>substrate</name>
    </ligand>
</feature>
<feature type="binding site" evidence="1">
    <location>
        <begin position="440"/>
        <end position="441"/>
    </location>
    <ligand>
        <name>ATP</name>
        <dbReference type="ChEBI" id="CHEBI:30616"/>
    </ligand>
</feature>
<feature type="binding site" evidence="1">
    <location>
        <position position="446"/>
    </location>
    <ligand>
        <name>ATP</name>
        <dbReference type="ChEBI" id="CHEBI:30616"/>
    </ligand>
</feature>
<evidence type="ECO:0000255" key="1">
    <source>
        <dbReference type="HAMAP-Rule" id="MF_00453"/>
    </source>
</evidence>
<accession>Q5HNB7</accession>
<name>PCKA_STAEQ</name>
<sequence>MSIDTYTETLKINKLIEKATSHFQLSSTQLYKKILKNHEGELTELGAINVKTGKYTGRSPKDKFIVTEPSYKDNINWGDINQPMDEETFLKLYNKVLDYLNQKEELYIFSGYAGSDKESRLKLKVINELAWHNLFARNMFIRPESIDEAQNIKPNFTIVSAPHFKANPKLDGTHSETFVIISFKHKVILIGGTEYAGEMKKGIFSVMNYLLPIQDIMSMHCSANVGEKGDVALFFGLSGTGKTTLSADPKRKLIGDDEHGWNKNGVFNIEGGCYAKAIHLSKQKEPQIYNAIKYGTILENTVTNDDGTVDFDDNTYTENTRAAYPIDYIENIVTPSKAAHPNTIIFLTADAFGVIPPISKLTKDQAMYHFLSGFTSKLAGTERGVTEPQPSFSTCFGAPFLPLSPTKYADLLGNLIDIHDVDVYLVNTGWTGGKYGVGRRISLHYTREMVDQAISGKLKNTKYIKDDTFGLNIPVQIDSVPTTILNPINAWNNKDNYKAQAYDLIQRFNNNFKKFGKEVEHIANKGAFNQ</sequence>
<reference key="1">
    <citation type="journal article" date="2005" name="J. Bacteriol.">
        <title>Insights on evolution of virulence and resistance from the complete genome analysis of an early methicillin-resistant Staphylococcus aureus strain and a biofilm-producing methicillin-resistant Staphylococcus epidermidis strain.</title>
        <authorList>
            <person name="Gill S.R."/>
            <person name="Fouts D.E."/>
            <person name="Archer G.L."/>
            <person name="Mongodin E.F."/>
            <person name="DeBoy R.T."/>
            <person name="Ravel J."/>
            <person name="Paulsen I.T."/>
            <person name="Kolonay J.F."/>
            <person name="Brinkac L.M."/>
            <person name="Beanan M.J."/>
            <person name="Dodson R.J."/>
            <person name="Daugherty S.C."/>
            <person name="Madupu R."/>
            <person name="Angiuoli S.V."/>
            <person name="Durkin A.S."/>
            <person name="Haft D.H."/>
            <person name="Vamathevan J.J."/>
            <person name="Khouri H."/>
            <person name="Utterback T.R."/>
            <person name="Lee C."/>
            <person name="Dimitrov G."/>
            <person name="Jiang L."/>
            <person name="Qin H."/>
            <person name="Weidman J."/>
            <person name="Tran K."/>
            <person name="Kang K.H."/>
            <person name="Hance I.R."/>
            <person name="Nelson K.E."/>
            <person name="Fraser C.M."/>
        </authorList>
    </citation>
    <scope>NUCLEOTIDE SEQUENCE [LARGE SCALE GENOMIC DNA]</scope>
    <source>
        <strain>ATCC 35984 / DSM 28319 / BCRC 17069 / CCUG 31568 / BM 3577 / RP62A</strain>
    </source>
</reference>
<comment type="function">
    <text evidence="1">Involved in the gluconeogenesis. Catalyzes the conversion of oxaloacetate (OAA) to phosphoenolpyruvate (PEP) through direct phosphoryl transfer between the nucleoside triphosphate and OAA.</text>
</comment>
<comment type="catalytic activity">
    <reaction evidence="1">
        <text>oxaloacetate + ATP = phosphoenolpyruvate + ADP + CO2</text>
        <dbReference type="Rhea" id="RHEA:18617"/>
        <dbReference type="ChEBI" id="CHEBI:16452"/>
        <dbReference type="ChEBI" id="CHEBI:16526"/>
        <dbReference type="ChEBI" id="CHEBI:30616"/>
        <dbReference type="ChEBI" id="CHEBI:58702"/>
        <dbReference type="ChEBI" id="CHEBI:456216"/>
        <dbReference type="EC" id="4.1.1.49"/>
    </reaction>
</comment>
<comment type="cofactor">
    <cofactor evidence="1">
        <name>Mn(2+)</name>
        <dbReference type="ChEBI" id="CHEBI:29035"/>
    </cofactor>
    <text evidence="1">Binds 1 Mn(2+) ion per subunit.</text>
</comment>
<comment type="pathway">
    <text evidence="1">Carbohydrate biosynthesis; gluconeogenesis.</text>
</comment>
<comment type="subcellular location">
    <subcellularLocation>
        <location evidence="1">Cytoplasm</location>
    </subcellularLocation>
</comment>
<comment type="similarity">
    <text evidence="1">Belongs to the phosphoenolpyruvate carboxykinase (ATP) family.</text>
</comment>
<keyword id="KW-0067">ATP-binding</keyword>
<keyword id="KW-0963">Cytoplasm</keyword>
<keyword id="KW-0210">Decarboxylase</keyword>
<keyword id="KW-0312">Gluconeogenesis</keyword>
<keyword id="KW-0456">Lyase</keyword>
<keyword id="KW-0464">Manganese</keyword>
<keyword id="KW-0479">Metal-binding</keyword>
<keyword id="KW-0547">Nucleotide-binding</keyword>
<keyword id="KW-1185">Reference proteome</keyword>
<organism>
    <name type="scientific">Staphylococcus epidermidis (strain ATCC 35984 / DSM 28319 / BCRC 17069 / CCUG 31568 / BM 3577 / RP62A)</name>
    <dbReference type="NCBI Taxonomy" id="176279"/>
    <lineage>
        <taxon>Bacteria</taxon>
        <taxon>Bacillati</taxon>
        <taxon>Bacillota</taxon>
        <taxon>Bacilli</taxon>
        <taxon>Bacillales</taxon>
        <taxon>Staphylococcaceae</taxon>
        <taxon>Staphylococcus</taxon>
    </lineage>
</organism>
<dbReference type="EC" id="4.1.1.49" evidence="1"/>
<dbReference type="EMBL" id="CP000029">
    <property type="protein sequence ID" value="AAW54718.1"/>
    <property type="molecule type" value="Genomic_DNA"/>
</dbReference>
<dbReference type="RefSeq" id="WP_002469572.1">
    <property type="nucleotide sequence ID" value="NC_002976.3"/>
</dbReference>
<dbReference type="SMR" id="Q5HNB7"/>
<dbReference type="STRING" id="176279.SERP1353"/>
<dbReference type="KEGG" id="ser:SERP1353"/>
<dbReference type="eggNOG" id="COG1866">
    <property type="taxonomic scope" value="Bacteria"/>
</dbReference>
<dbReference type="HOGENOM" id="CLU_018247_0_1_9"/>
<dbReference type="UniPathway" id="UPA00138"/>
<dbReference type="Proteomes" id="UP000000531">
    <property type="component" value="Chromosome"/>
</dbReference>
<dbReference type="GO" id="GO:0005829">
    <property type="term" value="C:cytosol"/>
    <property type="evidence" value="ECO:0007669"/>
    <property type="project" value="TreeGrafter"/>
</dbReference>
<dbReference type="GO" id="GO:0005524">
    <property type="term" value="F:ATP binding"/>
    <property type="evidence" value="ECO:0007669"/>
    <property type="project" value="UniProtKB-UniRule"/>
</dbReference>
<dbReference type="GO" id="GO:0046872">
    <property type="term" value="F:metal ion binding"/>
    <property type="evidence" value="ECO:0007669"/>
    <property type="project" value="UniProtKB-KW"/>
</dbReference>
<dbReference type="GO" id="GO:0004612">
    <property type="term" value="F:phosphoenolpyruvate carboxykinase (ATP) activity"/>
    <property type="evidence" value="ECO:0007669"/>
    <property type="project" value="UniProtKB-UniRule"/>
</dbReference>
<dbReference type="GO" id="GO:0006094">
    <property type="term" value="P:gluconeogenesis"/>
    <property type="evidence" value="ECO:0007669"/>
    <property type="project" value="UniProtKB-UniRule"/>
</dbReference>
<dbReference type="CDD" id="cd00484">
    <property type="entry name" value="PEPCK_ATP"/>
    <property type="match status" value="1"/>
</dbReference>
<dbReference type="FunFam" id="2.170.8.10:FF:000001">
    <property type="entry name" value="Phosphoenolpyruvate carboxykinase (ATP)"/>
    <property type="match status" value="1"/>
</dbReference>
<dbReference type="FunFam" id="3.40.449.10:FF:000001">
    <property type="entry name" value="Phosphoenolpyruvate carboxykinase (ATP)"/>
    <property type="match status" value="1"/>
</dbReference>
<dbReference type="Gene3D" id="3.90.228.20">
    <property type="match status" value="1"/>
</dbReference>
<dbReference type="Gene3D" id="3.40.449.10">
    <property type="entry name" value="Phosphoenolpyruvate Carboxykinase, domain 1"/>
    <property type="match status" value="1"/>
</dbReference>
<dbReference type="Gene3D" id="2.170.8.10">
    <property type="entry name" value="Phosphoenolpyruvate Carboxykinase, domain 2"/>
    <property type="match status" value="1"/>
</dbReference>
<dbReference type="HAMAP" id="MF_00453">
    <property type="entry name" value="PEPCK_ATP"/>
    <property type="match status" value="1"/>
</dbReference>
<dbReference type="InterPro" id="IPR001272">
    <property type="entry name" value="PEP_carboxykinase_ATP"/>
</dbReference>
<dbReference type="InterPro" id="IPR013035">
    <property type="entry name" value="PEP_carboxykinase_C"/>
</dbReference>
<dbReference type="InterPro" id="IPR008210">
    <property type="entry name" value="PEP_carboxykinase_N"/>
</dbReference>
<dbReference type="InterPro" id="IPR015994">
    <property type="entry name" value="PEPCK_ATP_CS"/>
</dbReference>
<dbReference type="NCBIfam" id="TIGR00224">
    <property type="entry name" value="pckA"/>
    <property type="match status" value="1"/>
</dbReference>
<dbReference type="NCBIfam" id="NF006820">
    <property type="entry name" value="PRK09344.1-2"/>
    <property type="match status" value="1"/>
</dbReference>
<dbReference type="NCBIfam" id="NF006821">
    <property type="entry name" value="PRK09344.1-3"/>
    <property type="match status" value="1"/>
</dbReference>
<dbReference type="PANTHER" id="PTHR30031:SF0">
    <property type="entry name" value="PHOSPHOENOLPYRUVATE CARBOXYKINASE (ATP)"/>
    <property type="match status" value="1"/>
</dbReference>
<dbReference type="PANTHER" id="PTHR30031">
    <property type="entry name" value="PHOSPHOENOLPYRUVATE CARBOXYKINASE ATP"/>
    <property type="match status" value="1"/>
</dbReference>
<dbReference type="Pfam" id="PF01293">
    <property type="entry name" value="PEPCK_ATP"/>
    <property type="match status" value="1"/>
</dbReference>
<dbReference type="PIRSF" id="PIRSF006294">
    <property type="entry name" value="PEP_crbxkin"/>
    <property type="match status" value="1"/>
</dbReference>
<dbReference type="SUPFAM" id="SSF68923">
    <property type="entry name" value="PEP carboxykinase N-terminal domain"/>
    <property type="match status" value="1"/>
</dbReference>
<dbReference type="SUPFAM" id="SSF53795">
    <property type="entry name" value="PEP carboxykinase-like"/>
    <property type="match status" value="1"/>
</dbReference>
<dbReference type="PROSITE" id="PS00532">
    <property type="entry name" value="PEPCK_ATP"/>
    <property type="match status" value="1"/>
</dbReference>